<organism>
    <name type="scientific">Schizosaccharomyces pombe (strain 972 / ATCC 24843)</name>
    <name type="common">Fission yeast</name>
    <dbReference type="NCBI Taxonomy" id="284812"/>
    <lineage>
        <taxon>Eukaryota</taxon>
        <taxon>Fungi</taxon>
        <taxon>Dikarya</taxon>
        <taxon>Ascomycota</taxon>
        <taxon>Taphrinomycotina</taxon>
        <taxon>Schizosaccharomycetes</taxon>
        <taxon>Schizosaccharomycetales</taxon>
        <taxon>Schizosaccharomycetaceae</taxon>
        <taxon>Schizosaccharomyces</taxon>
    </lineage>
</organism>
<comment type="function">
    <text evidence="2">Promotes the onset of gluconate uptake upon glucose starvation.</text>
</comment>
<comment type="similarity">
    <text evidence="3">To S.pombe pac2 in the N-terminal region.</text>
</comment>
<evidence type="ECO:0000256" key="1">
    <source>
        <dbReference type="SAM" id="MobiDB-lite"/>
    </source>
</evidence>
<evidence type="ECO:0000269" key="2">
    <source>
    </source>
</evidence>
<evidence type="ECO:0000305" key="3"/>
<sequence length="720" mass="78726">MTEPGNLQPTFVGFIGTTVDALLLFEACRQNYTHFVDRRPQDRERERLIRSGSVFVFDEVQSGIKRWTDGIAWSPSRVIGNFLVYRQLCKKNSVSDRKRSSKSRSDSDEEEVSAFTVSVPVDVDVASHVNISSPSAPSLSDNLFPGSSFSASSQQNPSSPGSNDIKSEFAAVKNEYVLSPTSPTTSAAFPSSFSSLPLVSSKPTGTPFVPKSPPSSSPSTTNVSNASTSSAPINPRAPQTRRESISSTSSIHYCSSSSLSYLHDTERALVGSLTDSYGFKKSGLIKKTISLMIDGRLHHLISYYTPEDVLNGKLQTPSSFNLFQQLTISKDLLEYKSFRIPPLVEAAESEKISQLSTLEKRTLPSFPYNPFFSSSTAEIDPYHFQGLTLSTSPISGVESSSLSSAISRNQSNLSSFQQQQQFSALQSISNNALNENIEQPPIKMAARHSYPNFLQTLPQYMNDVYNPSGLAFNPVNPNANNSFVNLNLIQFTSPSQALFDYGEGPYVDQKSQYLQPKQPSSNTDSIDQSSYNMSLAASKQFLTSDTQPDVNENYSFISNSIPKNLSTSWNQNMGYHVTNSNSELASQNPLYAQQAVSMESMGNAIQSSAYSAMSTPHGGHYDHYAATAKGKNPLAAENHASGGRLPKVPIPPLSNMRRGSVPIIPSSASLPMRTSGNRFCHYSSLNGNHNRISARTNPYPINNQTMLFTEPLSKERGSLS</sequence>
<accession>O14367</accession>
<dbReference type="EMBL" id="X92655">
    <property type="protein sequence ID" value="CAA63345.1"/>
    <property type="molecule type" value="Genomic_DNA"/>
</dbReference>
<dbReference type="EMBL" id="CU329670">
    <property type="protein sequence ID" value="CAB61447.1"/>
    <property type="molecule type" value="Genomic_DNA"/>
</dbReference>
<dbReference type="PIR" id="T43327">
    <property type="entry name" value="T43327"/>
</dbReference>
<dbReference type="RefSeq" id="NP_592911.1">
    <property type="nucleotide sequence ID" value="NM_001018311.2"/>
</dbReference>
<dbReference type="BioGRID" id="278810">
    <property type="interactions" value="8"/>
</dbReference>
<dbReference type="STRING" id="284812.O14367"/>
<dbReference type="iPTMnet" id="O14367"/>
<dbReference type="PaxDb" id="4896-SPAC1751.01c.1"/>
<dbReference type="EnsemblFungi" id="SPAC1751.01c.1">
    <property type="protein sequence ID" value="SPAC1751.01c.1:pep"/>
    <property type="gene ID" value="SPAC1751.01c"/>
</dbReference>
<dbReference type="GeneID" id="2542344"/>
<dbReference type="KEGG" id="spo:2542344"/>
<dbReference type="PomBase" id="SPAC1751.01c">
    <property type="gene designation" value="gti1"/>
</dbReference>
<dbReference type="VEuPathDB" id="FungiDB:SPAC1751.01c"/>
<dbReference type="eggNOG" id="KOG4476">
    <property type="taxonomic scope" value="Eukaryota"/>
</dbReference>
<dbReference type="HOGENOM" id="CLU_384098_0_0_1"/>
<dbReference type="InParanoid" id="O14367"/>
<dbReference type="PRO" id="PR:O14367"/>
<dbReference type="Proteomes" id="UP000002485">
    <property type="component" value="Chromosome I"/>
</dbReference>
<dbReference type="GO" id="GO:0005829">
    <property type="term" value="C:cytosol"/>
    <property type="evidence" value="ECO:0007005"/>
    <property type="project" value="PomBase"/>
</dbReference>
<dbReference type="GO" id="GO:0005634">
    <property type="term" value="C:nucleus"/>
    <property type="evidence" value="ECO:0007005"/>
    <property type="project" value="PomBase"/>
</dbReference>
<dbReference type="GO" id="GO:0003677">
    <property type="term" value="F:DNA binding"/>
    <property type="evidence" value="ECO:0000318"/>
    <property type="project" value="GO_Central"/>
</dbReference>
<dbReference type="GO" id="GO:0035432">
    <property type="term" value="P:positive regulation of gluconate transmembrane transport"/>
    <property type="evidence" value="ECO:0000315"/>
    <property type="project" value="PomBase"/>
</dbReference>
<dbReference type="GO" id="GO:0007165">
    <property type="term" value="P:signal transduction"/>
    <property type="evidence" value="ECO:0000255"/>
    <property type="project" value="PomBase"/>
</dbReference>
<dbReference type="InterPro" id="IPR018608">
    <property type="entry name" value="Gti1/Pac2"/>
</dbReference>
<dbReference type="PANTHER" id="PTHR28027">
    <property type="entry name" value="TRANSCRIPTIONAL REGULATOR MIT1"/>
    <property type="match status" value="1"/>
</dbReference>
<dbReference type="PANTHER" id="PTHR28027:SF2">
    <property type="entry name" value="TRANSCRIPTIONAL REGULATOR MIT1"/>
    <property type="match status" value="1"/>
</dbReference>
<dbReference type="Pfam" id="PF09729">
    <property type="entry name" value="Gti1_Pac2"/>
    <property type="match status" value="1"/>
</dbReference>
<proteinExistence type="predicted"/>
<keyword id="KW-1185">Reference proteome</keyword>
<keyword id="KW-0813">Transport</keyword>
<gene>
    <name type="primary">gti1</name>
    <name type="ORF">SPAC1751.01c</name>
</gene>
<feature type="chain" id="PRO_0000083874" description="Gluconate transport inducer 1">
    <location>
        <begin position="1"/>
        <end position="720"/>
    </location>
</feature>
<feature type="region of interest" description="Disordered" evidence="1">
    <location>
        <begin position="146"/>
        <end position="165"/>
    </location>
</feature>
<feature type="region of interest" description="Disordered" evidence="1">
    <location>
        <begin position="203"/>
        <end position="248"/>
    </location>
</feature>
<feature type="compositionally biased region" description="Low complexity" evidence="1">
    <location>
        <begin position="146"/>
        <end position="163"/>
    </location>
</feature>
<feature type="compositionally biased region" description="Low complexity" evidence="1">
    <location>
        <begin position="217"/>
        <end position="232"/>
    </location>
</feature>
<name>GTI1_SCHPO</name>
<protein>
    <recommendedName>
        <fullName>Gluconate transport inducer 1</fullName>
    </recommendedName>
</protein>
<reference key="1">
    <citation type="journal article" date="1997" name="J. Cell Sci.">
        <title>Onset of gluconate-H+ symport in Schizosaccharomyces pombe is regulated by the kinases Wis1 and Pka1, and requires the gti1+ gene product.</title>
        <authorList>
            <person name="Caspari T."/>
        </authorList>
    </citation>
    <scope>NUCLEOTIDE SEQUENCE [GENOMIC DNA]</scope>
    <scope>FUNCTION</scope>
    <source>
        <strain>SP011</strain>
    </source>
</reference>
<reference key="2">
    <citation type="journal article" date="2002" name="Nature">
        <title>The genome sequence of Schizosaccharomyces pombe.</title>
        <authorList>
            <person name="Wood V."/>
            <person name="Gwilliam R."/>
            <person name="Rajandream M.A."/>
            <person name="Lyne M.H."/>
            <person name="Lyne R."/>
            <person name="Stewart A."/>
            <person name="Sgouros J.G."/>
            <person name="Peat N."/>
            <person name="Hayles J."/>
            <person name="Baker S.G."/>
            <person name="Basham D."/>
            <person name="Bowman S."/>
            <person name="Brooks K."/>
            <person name="Brown D."/>
            <person name="Brown S."/>
            <person name="Chillingworth T."/>
            <person name="Churcher C.M."/>
            <person name="Collins M."/>
            <person name="Connor R."/>
            <person name="Cronin A."/>
            <person name="Davis P."/>
            <person name="Feltwell T."/>
            <person name="Fraser A."/>
            <person name="Gentles S."/>
            <person name="Goble A."/>
            <person name="Hamlin N."/>
            <person name="Harris D.E."/>
            <person name="Hidalgo J."/>
            <person name="Hodgson G."/>
            <person name="Holroyd S."/>
            <person name="Hornsby T."/>
            <person name="Howarth S."/>
            <person name="Huckle E.J."/>
            <person name="Hunt S."/>
            <person name="Jagels K."/>
            <person name="James K.D."/>
            <person name="Jones L."/>
            <person name="Jones M."/>
            <person name="Leather S."/>
            <person name="McDonald S."/>
            <person name="McLean J."/>
            <person name="Mooney P."/>
            <person name="Moule S."/>
            <person name="Mungall K.L."/>
            <person name="Murphy L.D."/>
            <person name="Niblett D."/>
            <person name="Odell C."/>
            <person name="Oliver K."/>
            <person name="O'Neil S."/>
            <person name="Pearson D."/>
            <person name="Quail M.A."/>
            <person name="Rabbinowitsch E."/>
            <person name="Rutherford K.M."/>
            <person name="Rutter S."/>
            <person name="Saunders D."/>
            <person name="Seeger K."/>
            <person name="Sharp S."/>
            <person name="Skelton J."/>
            <person name="Simmonds M.N."/>
            <person name="Squares R."/>
            <person name="Squares S."/>
            <person name="Stevens K."/>
            <person name="Taylor K."/>
            <person name="Taylor R.G."/>
            <person name="Tivey A."/>
            <person name="Walsh S.V."/>
            <person name="Warren T."/>
            <person name="Whitehead S."/>
            <person name="Woodward J.R."/>
            <person name="Volckaert G."/>
            <person name="Aert R."/>
            <person name="Robben J."/>
            <person name="Grymonprez B."/>
            <person name="Weltjens I."/>
            <person name="Vanstreels E."/>
            <person name="Rieger M."/>
            <person name="Schaefer M."/>
            <person name="Mueller-Auer S."/>
            <person name="Gabel C."/>
            <person name="Fuchs M."/>
            <person name="Duesterhoeft A."/>
            <person name="Fritzc C."/>
            <person name="Holzer E."/>
            <person name="Moestl D."/>
            <person name="Hilbert H."/>
            <person name="Borzym K."/>
            <person name="Langer I."/>
            <person name="Beck A."/>
            <person name="Lehrach H."/>
            <person name="Reinhardt R."/>
            <person name="Pohl T.M."/>
            <person name="Eger P."/>
            <person name="Zimmermann W."/>
            <person name="Wedler H."/>
            <person name="Wambutt R."/>
            <person name="Purnelle B."/>
            <person name="Goffeau A."/>
            <person name="Cadieu E."/>
            <person name="Dreano S."/>
            <person name="Gloux S."/>
            <person name="Lelaure V."/>
            <person name="Mottier S."/>
            <person name="Galibert F."/>
            <person name="Aves S.J."/>
            <person name="Xiang Z."/>
            <person name="Hunt C."/>
            <person name="Moore K."/>
            <person name="Hurst S.M."/>
            <person name="Lucas M."/>
            <person name="Rochet M."/>
            <person name="Gaillardin C."/>
            <person name="Tallada V.A."/>
            <person name="Garzon A."/>
            <person name="Thode G."/>
            <person name="Daga R.R."/>
            <person name="Cruzado L."/>
            <person name="Jimenez J."/>
            <person name="Sanchez M."/>
            <person name="del Rey F."/>
            <person name="Benito J."/>
            <person name="Dominguez A."/>
            <person name="Revuelta J.L."/>
            <person name="Moreno S."/>
            <person name="Armstrong J."/>
            <person name="Forsburg S.L."/>
            <person name="Cerutti L."/>
            <person name="Lowe T."/>
            <person name="McCombie W.R."/>
            <person name="Paulsen I."/>
            <person name="Potashkin J."/>
            <person name="Shpakovski G.V."/>
            <person name="Ussery D."/>
            <person name="Barrell B.G."/>
            <person name="Nurse P."/>
        </authorList>
    </citation>
    <scope>NUCLEOTIDE SEQUENCE [LARGE SCALE GENOMIC DNA]</scope>
    <source>
        <strain>972 / ATCC 24843</strain>
    </source>
</reference>